<sequence>MTMGEIGDSVQLKEEGNKHFQAGEIDQAIDCYTKAIKTCKKEDKKALAVIYRNRSACFLKKENYSNAASDATKAIDVDAADIKALYRRCQAFEKLGKLDMAFKDVQRCATIEPKNKTFLETLRRLGAEIQQKLKTTFSTDSRVQNMFDILFSDEPDKEKREKAANNLIVLAREDAGAERIFQNNGVPLLMQLIDTGKPEMILAAIRTLSGMCTGHRARATAIIHSVGISKLCSIMAVDNEEIALATANLFQCVNDSLSGGDKRNYGKEEALVLDSSKDLKDILLALLEMIASKNVSGHGRDQALNLLTKNVPRQNKKSTDNSKCLFTIDHGLKKILKVCGQVPDLPDQLPMTENTQLIASVLLSKLYDDLRCDPERDQFRDICDDYIKSKFDPNDMDKNIHAINTLSGILQGPFDLGNVLAGRQGVMEMMVALCGSEREVDQLVAVEALIHASTKTSKASFFISNGVSLLKEMYKKTKNEKIKIRALVGLCKLGSAGGDDYSMRQFAEGSTEKLAKQCRKWLCNPTLDVRTRKWAIEGLAYLTNDADVKDDFAEDEPAMRAMFELTKSNDKTILYAVACTLVNCTNSYDKKEIIPEMVQLAKFSKQHVPEQHPKDKKDFIVRRVKRLLKAGVTSALAVMVKADNSILTDQTKEMLARVFLALTEDVKDRGIIVAQGGGKALIPLALEGTDKGKIKASHALAKIAAVSNPEIAFPGERIYEVVRPLVSLLGTDRDGMENFEALRGLTNLAGLNDKLRVKILKEKALPEIENYMFEDHEQIRQAATECMCNLVCCKEVQDRYLEDGNDKLKLLVLLCGEDEEKLQRAAAGALAMLTAAQKKLAVKMTKVTEQWLEILQRLCIHDNPEIQHRGLVTVFNMLDADDQLAKKLVESDMLEILTYVAKLEDNPKKQNAIDAARACLSKAMDNGLIKPFSN</sequence>
<accession>Q6DGE9</accession>
<accession>Q8UVX6</accession>
<keyword id="KW-0143">Chaperone</keyword>
<keyword id="KW-0963">Cytoplasm</keyword>
<keyword id="KW-0217">Developmental protein</keyword>
<keyword id="KW-0221">Differentiation</keyword>
<keyword id="KW-0517">Myogenesis</keyword>
<keyword id="KW-1185">Reference proteome</keyword>
<keyword id="KW-0677">Repeat</keyword>
<keyword id="KW-0802">TPR repeat</keyword>
<evidence type="ECO:0000250" key="1">
    <source>
        <dbReference type="UniProtKB" id="Q8CGY6"/>
    </source>
</evidence>
<evidence type="ECO:0000250" key="2">
    <source>
        <dbReference type="UniProtKB" id="Q8IWX7"/>
    </source>
</evidence>
<evidence type="ECO:0000255" key="3"/>
<evidence type="ECO:0000269" key="4">
    <source>
    </source>
</evidence>
<evidence type="ECO:0000269" key="5">
    <source>
    </source>
</evidence>
<evidence type="ECO:0000269" key="6">
    <source>
    </source>
</evidence>
<evidence type="ECO:0000269" key="7">
    <source>
    </source>
</evidence>
<evidence type="ECO:0000269" key="8">
    <source>
    </source>
</evidence>
<evidence type="ECO:0000269" key="9">
    <source>
    </source>
</evidence>
<evidence type="ECO:0000269" key="10">
    <source>
    </source>
</evidence>
<evidence type="ECO:0000305" key="11"/>
<evidence type="ECO:0000312" key="12">
    <source>
        <dbReference type="EMBL" id="AAH76400.1"/>
    </source>
</evidence>
<evidence type="ECO:0000312" key="13">
    <source>
        <dbReference type="EMBL" id="AAL57031.1"/>
    </source>
</evidence>
<evidence type="ECO:0000312" key="14">
    <source>
        <dbReference type="EMBL" id="CAP19503.1"/>
    </source>
</evidence>
<evidence type="ECO:0000312" key="15">
    <source>
        <dbReference type="ZFIN" id="ZDB-GENE-020919-3"/>
    </source>
</evidence>
<gene>
    <name evidence="15" type="primary">unc45b</name>
    <name evidence="15" type="synonym">unc45r</name>
    <name type="ORF">si:ch211-204d2.1</name>
</gene>
<organism>
    <name type="scientific">Danio rerio</name>
    <name type="common">Zebrafish</name>
    <name type="synonym">Brachydanio rerio</name>
    <dbReference type="NCBI Taxonomy" id="7955"/>
    <lineage>
        <taxon>Eukaryota</taxon>
        <taxon>Metazoa</taxon>
        <taxon>Chordata</taxon>
        <taxon>Craniata</taxon>
        <taxon>Vertebrata</taxon>
        <taxon>Euteleostomi</taxon>
        <taxon>Actinopterygii</taxon>
        <taxon>Neopterygii</taxon>
        <taxon>Teleostei</taxon>
        <taxon>Ostariophysi</taxon>
        <taxon>Cypriniformes</taxon>
        <taxon>Danionidae</taxon>
        <taxon>Danioninae</taxon>
        <taxon>Danio</taxon>
    </lineage>
</organism>
<feature type="chain" id="PRO_0000412996" description="Protein unc-45 homolog B">
    <location>
        <begin position="1"/>
        <end position="934"/>
    </location>
</feature>
<feature type="repeat" description="TPR 1" evidence="3">
    <location>
        <begin position="9"/>
        <end position="42"/>
    </location>
</feature>
<feature type="repeat" description="TPR 2" evidence="3">
    <location>
        <begin position="48"/>
        <end position="81"/>
    </location>
</feature>
<feature type="repeat" description="TPR 3" evidence="3">
    <location>
        <begin position="83"/>
        <end position="115"/>
    </location>
</feature>
<feature type="repeat" description="ARM 1" evidence="3">
    <location>
        <begin position="174"/>
        <end position="213"/>
    </location>
</feature>
<feature type="repeat" description="ARM 2" evidence="3">
    <location>
        <begin position="216"/>
        <end position="255"/>
    </location>
</feature>
<feature type="repeat" description="ARM 3" evidence="3">
    <location>
        <begin position="753"/>
        <end position="792"/>
    </location>
</feature>
<comment type="function">
    <text evidence="1 5 6 8 9 10">Acts as a co-chaperone for HSP90 and is required for proper folding of the myosin motor domain (By similarity). Plays a role in sarcomere formation during muscle cell development. Required for myoseptal integrity, myofiber attachment, motility and craniofacial development (PubMed:17189627, PubMed:17586488, PubMed:20440001, PubMed:20849610). Is necessary for normal early lens development (PubMed:24549050).</text>
</comment>
<comment type="subunit">
    <text evidence="6 7 8">Interacts with apobec2a, apobec2b, hsp90a.1, hsp90a.2, hsp90ab1 and myosin.</text>
</comment>
<comment type="subcellular location">
    <subcellularLocation>
        <location evidence="7 8">Cytoplasm</location>
        <location evidence="7 8">Myofibril</location>
        <location evidence="7 8">Sarcomere</location>
        <location evidence="7 8">Z line</location>
    </subcellularLocation>
    <subcellularLocation>
        <location evidence="7 8">Cytoplasm</location>
        <location evidence="7 8">Myofibril</location>
        <location evidence="7 8">Sarcomere</location>
        <location evidence="7 8">A band</location>
    </subcellularLocation>
    <subcellularLocation>
        <location evidence="7 8">Cytoplasm</location>
        <location evidence="7 8">Perinuclear region</location>
    </subcellularLocation>
    <text evidence="7 8">Expressed at the Z line and in the perinuclear region of myofibrils. Translocates to the A band in response to stress conditions and fibril damage.</text>
</comment>
<comment type="tissue specificity">
    <text evidence="4 5">Expressed in striated muscle tissue including somites, heart and craniofacial muscle. Detected in mesoderm adjacent to the dorsal midline during the late gastrula stages and in somitic mesoderm during development of trunk skeletal muscle. Also expressed in cranial skeletal muscle and in cardiac and smooth muscle. Detected in somitic muscle and heart primordium of 24 hour embryos. At later stages, expressed in muscles of pectoral fins, jaw, branchial arches and eye.</text>
</comment>
<comment type="developmental stage">
    <text evidence="4 5">First detected at the late gastrula stages around 9 hours post-fertilization (hpf). Expression intensifies by the end of gastrulation around 10 hpf, continues into early somitogenesis stages around 12 hpf and persists in the somites until 96 hpf when the somites give rise to the trunk skeletal muscle.</text>
</comment>
<comment type="sequence caution" evidence="11">
    <conflict type="erroneous initiation">
        <sequence resource="EMBL-CDS" id="AAH76400"/>
    </conflict>
    <text>Truncated N-terminus.</text>
</comment>
<proteinExistence type="evidence at protein level"/>
<dbReference type="EMBL" id="AF330001">
    <property type="protein sequence ID" value="AAL57031.1"/>
    <property type="molecule type" value="mRNA"/>
</dbReference>
<dbReference type="EMBL" id="CR847826">
    <property type="protein sequence ID" value="CAP19503.1"/>
    <property type="molecule type" value="Genomic_DNA"/>
</dbReference>
<dbReference type="EMBL" id="BC076400">
    <property type="protein sequence ID" value="AAH76400.1"/>
    <property type="status" value="ALT_INIT"/>
    <property type="molecule type" value="mRNA"/>
</dbReference>
<dbReference type="RefSeq" id="NP_705959.1">
    <property type="nucleotide sequence ID" value="NM_153673.2"/>
</dbReference>
<dbReference type="RefSeq" id="XP_017212759.1">
    <property type="nucleotide sequence ID" value="XM_017357270.1"/>
</dbReference>
<dbReference type="SMR" id="Q6DGE9"/>
<dbReference type="FunCoup" id="Q6DGE9">
    <property type="interactions" value="262"/>
</dbReference>
<dbReference type="STRING" id="7955.ENSDARP00000023678"/>
<dbReference type="PaxDb" id="7955-ENSDARP00000023678"/>
<dbReference type="Ensembl" id="ENSDART00000002164">
    <property type="protein sequence ID" value="ENSDARP00000023678"/>
    <property type="gene ID" value="ENSDARG00000008433"/>
</dbReference>
<dbReference type="GeneID" id="266640"/>
<dbReference type="KEGG" id="dre:266640"/>
<dbReference type="AGR" id="ZFIN:ZDB-GENE-020919-3"/>
<dbReference type="CTD" id="146862"/>
<dbReference type="ZFIN" id="ZDB-GENE-020919-3">
    <property type="gene designation" value="unc45b"/>
</dbReference>
<dbReference type="eggNOG" id="KOG4151">
    <property type="taxonomic scope" value="Eukaryota"/>
</dbReference>
<dbReference type="HOGENOM" id="CLU_007331_0_0_1"/>
<dbReference type="InParanoid" id="Q6DGE9"/>
<dbReference type="OMA" id="DTQTRRW"/>
<dbReference type="OrthoDB" id="199930at2759"/>
<dbReference type="PhylomeDB" id="Q6DGE9"/>
<dbReference type="TreeFam" id="TF314096"/>
<dbReference type="PRO" id="PR:Q6DGE9"/>
<dbReference type="Proteomes" id="UP000000437">
    <property type="component" value="Chromosome 8"/>
</dbReference>
<dbReference type="Bgee" id="ENSDARG00000008433">
    <property type="expression patterns" value="Expressed in somite and 45 other cell types or tissues"/>
</dbReference>
<dbReference type="ExpressionAtlas" id="Q6DGE9">
    <property type="expression patterns" value="baseline and differential"/>
</dbReference>
<dbReference type="GO" id="GO:0031672">
    <property type="term" value="C:A band"/>
    <property type="evidence" value="ECO:0007669"/>
    <property type="project" value="UniProtKB-SubCell"/>
</dbReference>
<dbReference type="GO" id="GO:0005737">
    <property type="term" value="C:cytoplasm"/>
    <property type="evidence" value="ECO:0000314"/>
    <property type="project" value="ZFIN"/>
</dbReference>
<dbReference type="GO" id="GO:0048471">
    <property type="term" value="C:perinuclear region of cytoplasm"/>
    <property type="evidence" value="ECO:0007669"/>
    <property type="project" value="UniProtKB-SubCell"/>
</dbReference>
<dbReference type="GO" id="GO:0030018">
    <property type="term" value="C:Z disc"/>
    <property type="evidence" value="ECO:0000314"/>
    <property type="project" value="ZFIN"/>
</dbReference>
<dbReference type="GO" id="GO:0051879">
    <property type="term" value="F:Hsp90 protein binding"/>
    <property type="evidence" value="ECO:0000318"/>
    <property type="project" value="GO_Central"/>
</dbReference>
<dbReference type="GO" id="GO:0048738">
    <property type="term" value="P:cardiac muscle tissue development"/>
    <property type="evidence" value="ECO:0000315"/>
    <property type="project" value="ZFIN"/>
</dbReference>
<dbReference type="GO" id="GO:0061077">
    <property type="term" value="P:chaperone-mediated protein folding"/>
    <property type="evidence" value="ECO:0000318"/>
    <property type="project" value="GO_Central"/>
</dbReference>
<dbReference type="GO" id="GO:0002088">
    <property type="term" value="P:lens development in camera-type eye"/>
    <property type="evidence" value="ECO:0000315"/>
    <property type="project" value="UniProtKB"/>
</dbReference>
<dbReference type="GO" id="GO:0055001">
    <property type="term" value="P:muscle cell development"/>
    <property type="evidence" value="ECO:0000315"/>
    <property type="project" value="ZFIN"/>
</dbReference>
<dbReference type="GO" id="GO:0030239">
    <property type="term" value="P:myofibril assembly"/>
    <property type="evidence" value="ECO:0000315"/>
    <property type="project" value="ZFIN"/>
</dbReference>
<dbReference type="GO" id="GO:0060538">
    <property type="term" value="P:skeletal muscle organ development"/>
    <property type="evidence" value="ECO:0000315"/>
    <property type="project" value="ZFIN"/>
</dbReference>
<dbReference type="GO" id="GO:0007519">
    <property type="term" value="P:skeletal muscle tissue development"/>
    <property type="evidence" value="ECO:0000315"/>
    <property type="project" value="ZFIN"/>
</dbReference>
<dbReference type="GO" id="GO:0055002">
    <property type="term" value="P:striated muscle cell development"/>
    <property type="evidence" value="ECO:0000315"/>
    <property type="project" value="ZFIN"/>
</dbReference>
<dbReference type="FunFam" id="1.25.10.10:FF:000043">
    <property type="entry name" value="Unc-45 myosin chaperone B"/>
    <property type="match status" value="1"/>
</dbReference>
<dbReference type="FunFam" id="1.25.10.10:FF:000153">
    <property type="entry name" value="Unc-45 myosin chaperone B"/>
    <property type="match status" value="1"/>
</dbReference>
<dbReference type="FunFam" id="1.25.40.10:FF:000025">
    <property type="entry name" value="Unc-45 myosin chaperone B"/>
    <property type="match status" value="1"/>
</dbReference>
<dbReference type="Gene3D" id="1.25.10.10">
    <property type="entry name" value="Leucine-rich Repeat Variant"/>
    <property type="match status" value="2"/>
</dbReference>
<dbReference type="Gene3D" id="1.25.40.10">
    <property type="entry name" value="Tetratricopeptide repeat domain"/>
    <property type="match status" value="1"/>
</dbReference>
<dbReference type="InterPro" id="IPR011989">
    <property type="entry name" value="ARM-like"/>
</dbReference>
<dbReference type="InterPro" id="IPR016024">
    <property type="entry name" value="ARM-type_fold"/>
</dbReference>
<dbReference type="InterPro" id="IPR000225">
    <property type="entry name" value="Armadillo"/>
</dbReference>
<dbReference type="InterPro" id="IPR011990">
    <property type="entry name" value="TPR-like_helical_dom_sf"/>
</dbReference>
<dbReference type="InterPro" id="IPR019734">
    <property type="entry name" value="TPR_rpt"/>
</dbReference>
<dbReference type="InterPro" id="IPR024660">
    <property type="entry name" value="UCS_central_dom"/>
</dbReference>
<dbReference type="PANTHER" id="PTHR45994">
    <property type="entry name" value="FI21225P1"/>
    <property type="match status" value="1"/>
</dbReference>
<dbReference type="PANTHER" id="PTHR45994:SF2">
    <property type="entry name" value="PROTEIN UNC-45 HOMOLOG B"/>
    <property type="match status" value="1"/>
</dbReference>
<dbReference type="Pfam" id="PF11701">
    <property type="entry name" value="UNC45-central"/>
    <property type="match status" value="1"/>
</dbReference>
<dbReference type="SMART" id="SM00185">
    <property type="entry name" value="ARM"/>
    <property type="match status" value="4"/>
</dbReference>
<dbReference type="SMART" id="SM00028">
    <property type="entry name" value="TPR"/>
    <property type="match status" value="3"/>
</dbReference>
<dbReference type="SUPFAM" id="SSF48371">
    <property type="entry name" value="ARM repeat"/>
    <property type="match status" value="2"/>
</dbReference>
<dbReference type="SUPFAM" id="SSF48452">
    <property type="entry name" value="TPR-like"/>
    <property type="match status" value="1"/>
</dbReference>
<dbReference type="PROSITE" id="PS50293">
    <property type="entry name" value="TPR_REGION"/>
    <property type="match status" value="1"/>
</dbReference>
<reference evidence="11 13" key="1">
    <citation type="journal article" date="2002" name="Dev. Dyn.">
        <title>A zebrafish unc-45-related gene expressed during muscle development.</title>
        <authorList>
            <person name="Etheridge L."/>
            <person name="Diiorio P."/>
            <person name="Sagerstrom C.G."/>
        </authorList>
    </citation>
    <scope>NUCLEOTIDE SEQUENCE [MRNA]</scope>
    <scope>TISSUE SPECIFICITY</scope>
    <scope>DEVELOPMENTAL STAGE</scope>
    <source>
        <tissue evidence="4">Embryo</tissue>
    </source>
</reference>
<reference evidence="11" key="2">
    <citation type="journal article" date="2007" name="Dev. Biol.">
        <title>The myosin co-chaperone UNC-45 is required for skeletal and cardiac muscle function in zebrafish.</title>
        <authorList>
            <person name="Wohlgemuth S.L."/>
            <person name="Crawford B.D."/>
            <person name="Pilgrim D.B."/>
        </authorList>
    </citation>
    <scope>NUCLEOTIDE SEQUENCE [MRNA]</scope>
    <scope>FUNCTION</scope>
    <scope>TISSUE SPECIFICITY</scope>
    <scope>DEVELOPMENTAL STAGE</scope>
    <source>
        <strain evidence="5">AB</strain>
    </source>
</reference>
<reference evidence="11" key="3">
    <citation type="journal article" date="2007" name="Dev. Biol.">
        <title>The UCS factor Steif/Unc-45b interacts with the heat shock protein Hsp90a during myofibrillogenesis.</title>
        <authorList>
            <person name="Etard C."/>
            <person name="Behra M."/>
            <person name="Fischer N."/>
            <person name="Hutcheson D."/>
            <person name="Geisler R."/>
            <person name="Strahle U."/>
        </authorList>
    </citation>
    <scope>NUCLEOTIDE SEQUENCE [MRNA]</scope>
    <scope>FUNCTION</scope>
    <scope>INTERACTION WITH HSP90A1; HSP90A2 AND HSP90AB</scope>
    <source>
        <tissue evidence="6">Embryo</tissue>
    </source>
</reference>
<reference evidence="11" key="4">
    <citation type="journal article" date="2008" name="J. Cell Biol.">
        <title>Shuttling of the chaperones Unc45b and Hsp90a between the A band and the Z line of the myofibril.</title>
        <authorList>
            <person name="Etard C."/>
            <person name="Roostalu U."/>
            <person name="Strahle U."/>
        </authorList>
    </citation>
    <scope>NUCLEOTIDE SEQUENCE [MRNA]</scope>
    <scope>INTERACTION WITH MYOSIN</scope>
    <scope>SUBCELLULAR LOCATION</scope>
</reference>
<reference key="5">
    <citation type="journal article" date="2013" name="Nature">
        <title>The zebrafish reference genome sequence and its relationship to the human genome.</title>
        <authorList>
            <person name="Howe K."/>
            <person name="Clark M.D."/>
            <person name="Torroja C.F."/>
            <person name="Torrance J."/>
            <person name="Berthelot C."/>
            <person name="Muffato M."/>
            <person name="Collins J.E."/>
            <person name="Humphray S."/>
            <person name="McLaren K."/>
            <person name="Matthews L."/>
            <person name="McLaren S."/>
            <person name="Sealy I."/>
            <person name="Caccamo M."/>
            <person name="Churcher C."/>
            <person name="Scott C."/>
            <person name="Barrett J.C."/>
            <person name="Koch R."/>
            <person name="Rauch G.J."/>
            <person name="White S."/>
            <person name="Chow W."/>
            <person name="Kilian B."/>
            <person name="Quintais L.T."/>
            <person name="Guerra-Assuncao J.A."/>
            <person name="Zhou Y."/>
            <person name="Gu Y."/>
            <person name="Yen J."/>
            <person name="Vogel J.H."/>
            <person name="Eyre T."/>
            <person name="Redmond S."/>
            <person name="Banerjee R."/>
            <person name="Chi J."/>
            <person name="Fu B."/>
            <person name="Langley E."/>
            <person name="Maguire S.F."/>
            <person name="Laird G.K."/>
            <person name="Lloyd D."/>
            <person name="Kenyon E."/>
            <person name="Donaldson S."/>
            <person name="Sehra H."/>
            <person name="Almeida-King J."/>
            <person name="Loveland J."/>
            <person name="Trevanion S."/>
            <person name="Jones M."/>
            <person name="Quail M."/>
            <person name="Willey D."/>
            <person name="Hunt A."/>
            <person name="Burton J."/>
            <person name="Sims S."/>
            <person name="McLay K."/>
            <person name="Plumb B."/>
            <person name="Davis J."/>
            <person name="Clee C."/>
            <person name="Oliver K."/>
            <person name="Clark R."/>
            <person name="Riddle C."/>
            <person name="Elliot D."/>
            <person name="Threadgold G."/>
            <person name="Harden G."/>
            <person name="Ware D."/>
            <person name="Begum S."/>
            <person name="Mortimore B."/>
            <person name="Kerry G."/>
            <person name="Heath P."/>
            <person name="Phillimore B."/>
            <person name="Tracey A."/>
            <person name="Corby N."/>
            <person name="Dunn M."/>
            <person name="Johnson C."/>
            <person name="Wood J."/>
            <person name="Clark S."/>
            <person name="Pelan S."/>
            <person name="Griffiths G."/>
            <person name="Smith M."/>
            <person name="Glithero R."/>
            <person name="Howden P."/>
            <person name="Barker N."/>
            <person name="Lloyd C."/>
            <person name="Stevens C."/>
            <person name="Harley J."/>
            <person name="Holt K."/>
            <person name="Panagiotidis G."/>
            <person name="Lovell J."/>
            <person name="Beasley H."/>
            <person name="Henderson C."/>
            <person name="Gordon D."/>
            <person name="Auger K."/>
            <person name="Wright D."/>
            <person name="Collins J."/>
            <person name="Raisen C."/>
            <person name="Dyer L."/>
            <person name="Leung K."/>
            <person name="Robertson L."/>
            <person name="Ambridge K."/>
            <person name="Leongamornlert D."/>
            <person name="McGuire S."/>
            <person name="Gilderthorp R."/>
            <person name="Griffiths C."/>
            <person name="Manthravadi D."/>
            <person name="Nichol S."/>
            <person name="Barker G."/>
            <person name="Whitehead S."/>
            <person name="Kay M."/>
            <person name="Brown J."/>
            <person name="Murnane C."/>
            <person name="Gray E."/>
            <person name="Humphries M."/>
            <person name="Sycamore N."/>
            <person name="Barker D."/>
            <person name="Saunders D."/>
            <person name="Wallis J."/>
            <person name="Babbage A."/>
            <person name="Hammond S."/>
            <person name="Mashreghi-Mohammadi M."/>
            <person name="Barr L."/>
            <person name="Martin S."/>
            <person name="Wray P."/>
            <person name="Ellington A."/>
            <person name="Matthews N."/>
            <person name="Ellwood M."/>
            <person name="Woodmansey R."/>
            <person name="Clark G."/>
            <person name="Cooper J."/>
            <person name="Tromans A."/>
            <person name="Grafham D."/>
            <person name="Skuce C."/>
            <person name="Pandian R."/>
            <person name="Andrews R."/>
            <person name="Harrison E."/>
            <person name="Kimberley A."/>
            <person name="Garnett J."/>
            <person name="Fosker N."/>
            <person name="Hall R."/>
            <person name="Garner P."/>
            <person name="Kelly D."/>
            <person name="Bird C."/>
            <person name="Palmer S."/>
            <person name="Gehring I."/>
            <person name="Berger A."/>
            <person name="Dooley C.M."/>
            <person name="Ersan-Urun Z."/>
            <person name="Eser C."/>
            <person name="Geiger H."/>
            <person name="Geisler M."/>
            <person name="Karotki L."/>
            <person name="Kirn A."/>
            <person name="Konantz J."/>
            <person name="Konantz M."/>
            <person name="Oberlander M."/>
            <person name="Rudolph-Geiger S."/>
            <person name="Teucke M."/>
            <person name="Lanz C."/>
            <person name="Raddatz G."/>
            <person name="Osoegawa K."/>
            <person name="Zhu B."/>
            <person name="Rapp A."/>
            <person name="Widaa S."/>
            <person name="Langford C."/>
            <person name="Yang F."/>
            <person name="Schuster S.C."/>
            <person name="Carter N.P."/>
            <person name="Harrow J."/>
            <person name="Ning Z."/>
            <person name="Herrero J."/>
            <person name="Searle S.M."/>
            <person name="Enright A."/>
            <person name="Geisler R."/>
            <person name="Plasterk R.H."/>
            <person name="Lee C."/>
            <person name="Westerfield M."/>
            <person name="de Jong P.J."/>
            <person name="Zon L.I."/>
            <person name="Postlethwait J.H."/>
            <person name="Nusslein-Volhard C."/>
            <person name="Hubbard T.J."/>
            <person name="Roest Crollius H."/>
            <person name="Rogers J."/>
            <person name="Stemple D.L."/>
        </authorList>
    </citation>
    <scope>NUCLEOTIDE SEQUENCE [LARGE SCALE GENOMIC DNA]</scope>
    <source>
        <strain>Tuebingen</strain>
    </source>
</reference>
<reference evidence="14" key="6">
    <citation type="submission" date="2004-07" db="EMBL/GenBank/DDBJ databases">
        <authorList>
            <consortium name="NIH - Zebrafish Gene Collection (ZGC) project"/>
        </authorList>
    </citation>
    <scope>NUCLEOTIDE SEQUENCE [LARGE SCALE MRNA]</scope>
    <source>
        <tissue evidence="12">Embryo</tissue>
    </source>
</reference>
<reference evidence="11" key="7">
    <citation type="journal article" date="2010" name="BMC Cell Biol.">
        <title>Knockdown and overexpression of Unc-45b result in defective myofibril organization in skeletal muscles of zebrafish embryos.</title>
        <authorList>
            <person name="Bernick E.P."/>
            <person name="Zhang P.J."/>
            <person name="Du S."/>
        </authorList>
    </citation>
    <scope>FUNCTION</scope>
</reference>
<reference evidence="11" key="8">
    <citation type="journal article" date="2010" name="J. Cell Biol.">
        <title>Lack of Apobec2-related proteins causes a dystrophic muscle phenotype in zebrafish embryos.</title>
        <authorList>
            <person name="Etard C."/>
            <person name="Roostalu U."/>
            <person name="Strahle U."/>
        </authorList>
    </citation>
    <scope>FUNCTION</scope>
    <scope>INTERACTION WITH APOBEC2A AND APOBEC2B</scope>
    <scope>SUBCELLULAR LOCATION</scope>
</reference>
<reference key="9">
    <citation type="journal article" date="2014" name="Eur. J. Hum. Genet.">
        <title>The myosin chaperone UNC45B is involved in lens development and autosomal dominant juvenile cataract.</title>
        <authorList>
            <person name="Hansen L."/>
            <person name="Comyn S."/>
            <person name="Mang Y."/>
            <person name="Lind-Thomsen A."/>
            <person name="Myhre L."/>
            <person name="Jean F."/>
            <person name="Eiberg H."/>
            <person name="Tommerup N."/>
            <person name="Rosenberg T."/>
            <person name="Pilgrim D."/>
        </authorList>
    </citation>
    <scope>FUNCTION</scope>
</reference>
<name>UN45B_DANRE</name>
<protein>
    <recommendedName>
        <fullName evidence="2 12">Protein unc-45 homolog B</fullName>
        <shortName evidence="2">Unc-45B</shortName>
    </recommendedName>
    <alternativeName>
        <fullName evidence="13">UNC45-related protein</fullName>
    </alternativeName>
</protein>